<keyword id="KW-0413">Isomerase</keyword>
<keyword id="KW-0436">Ligase</keyword>
<keyword id="KW-0596">Phosphopantetheine</keyword>
<keyword id="KW-0597">Phosphoprotein</keyword>
<keyword id="KW-1185">Reference proteome</keyword>
<keyword id="KW-0677">Repeat</keyword>
<protein>
    <recommendedName>
        <fullName evidence="4">Nonribosomal peptide synthetase ungA</fullName>
        <shortName evidence="4">NRPS ungA</shortName>
        <ecNumber evidence="3">6.3.2.-</ecNumber>
    </recommendedName>
    <alternativeName>
        <fullName evidence="4">Unguisins biosynthesis cluster protein A</fullName>
    </alternativeName>
</protein>
<organism>
    <name type="scientific">Aspergillus violaceofuscus (strain CBS 115571)</name>
    <dbReference type="NCBI Taxonomy" id="1450538"/>
    <lineage>
        <taxon>Eukaryota</taxon>
        <taxon>Fungi</taxon>
        <taxon>Dikarya</taxon>
        <taxon>Ascomycota</taxon>
        <taxon>Pezizomycotina</taxon>
        <taxon>Eurotiomycetes</taxon>
        <taxon>Eurotiomycetidae</taxon>
        <taxon>Eurotiales</taxon>
        <taxon>Aspergillaceae</taxon>
        <taxon>Aspergillus</taxon>
    </lineage>
</organism>
<comment type="function">
    <text evidence="3">Nonribosomal peptide synthetase; part of the gene cluster that mediates the biosynthesis of the unguisins, gamma-aminobutyric acid (GABA)-containing fungal cyclic heptapeptides with the amino acid sequence cyclo-(D-Ala1-D-Val2-L-Phe3-D-Val4-D-Ala5-D-Trp6-GABA7) for unguisin A and cyclo-(D-Ala1-D-Val2-L-Leu3-D-Val4-D-Ala5-D-Trp6-GABA7) for unguisin B (PubMed:36715406). UngA is the main enzyme within the cluster which condenses the 7 residues using its respective 7 modules (PubMed:36715406). The terminal condensation domain (Ct) is involved in cyclization with D-alanine and thereby releasing of unguisins A and B (PubMed:36715406). The alanine racemase ungC provides D-alanine, which is then accepted by the first adenylation domain of ungA (PubMed:36715406). Finally, the hydrolase ungD catalyzes the hydrolysis between the D-tryptophan and GABA residues of unguisins A and B to produce the corresponding linear peptides (PubMed:36715406).</text>
</comment>
<comment type="pathway">
    <text evidence="3">Secondary metabolite biosynthesis.</text>
</comment>
<comment type="domain">
    <text evidence="6">NRP synthetases are composed of discrete domains (adenylation (A), thiolation (T) or peptidyl carrier protein (PCP) and condensation (C) domains) which when grouped together are referred to as a single module. Each module is responsible for the recognition (via the A domain) and incorporation of a single amino acid into the growing peptide product. Thus, an NRP synthetase is generally composed of one or more modules and can terminate in a thioesterase domain (TE) that releases the newly synthesized peptide from the enzyme. Notably, many fungal NRPSs utilize a terminal condensation (Ct) domain for macrocyclization and peptide chain release. Occasionally, methyltransferase domains (responsible for amino acid methylation) are present within the NRP synthetase. UngA has the following architecture: A-T-C-A-T-E-C-A-T-C-A-T-E-C-A-T-E-C-A-T-E-C-A-T-Ct.</text>
</comment>
<comment type="similarity">
    <text evidence="5">Belongs to the NRP synthetase family.</text>
</comment>
<comment type="sequence caution" evidence="6">
    <conflict type="erroneous gene model prediction">
        <sequence resource="EMBL-CDS" id="PYI15152"/>
    </conflict>
</comment>
<accession>A0A2V5H0B0</accession>
<reference key="1">
    <citation type="submission" date="2018-02" db="EMBL/GenBank/DDBJ databases">
        <title>The genomes of Aspergillus section Nigri reveals drivers in fungal speciation.</title>
        <authorList>
            <consortium name="DOE Joint Genome Institute"/>
            <person name="Vesth T.C."/>
            <person name="Nybo J."/>
            <person name="Theobald S."/>
            <person name="Brandl J."/>
            <person name="Frisvad J.C."/>
            <person name="Nielsen K.F."/>
            <person name="Lyhne E.K."/>
            <person name="Kogle M.E."/>
            <person name="Kuo A."/>
            <person name="Riley R."/>
            <person name="Clum A."/>
            <person name="Nolan M."/>
            <person name="Lipzen A."/>
            <person name="Salamov A."/>
            <person name="Henrissat B."/>
            <person name="Wiebenga A."/>
            <person name="De vries R.P."/>
            <person name="Grigoriev I.V."/>
            <person name="Mortensen U.H."/>
            <person name="Andersen M.R."/>
            <person name="Baker S.E."/>
        </authorList>
    </citation>
    <scope>NUCLEOTIDE SEQUENCE [LARGE SCALE GENOMIC DNA]</scope>
    <source>
        <strain>CBS 115571</strain>
    </source>
</reference>
<reference key="2">
    <citation type="journal article" date="2023" name="J. Nat. Prod.">
        <title>Biosynthetic characterization, heterologous production, and genomics-guided discovery of GABA-containing fungal heptapeptides.</title>
        <authorList>
            <person name="Wei X."/>
            <person name="Chan T.K."/>
            <person name="Kong C.T.D."/>
            <person name="Matsuda Y."/>
        </authorList>
    </citation>
    <scope>FUNCTION</scope>
    <scope>PATHWAY</scope>
</reference>
<name>UNGA_ASPV1</name>
<sequence>MSAESWKLQPRIEGLRGQDPVLASLIALEAWVLQAVEQFQFSTGVLKIGDAGDAPGGQWQLDGGDPRVLIAQLRGGQARQTVEDHHENSRDCAAHLRLSLLDSSEMLLILRLRFQGRAPASKSWCQEGQEGQEERCAGQVVEMECFFGAKDGGLELHRIPSPPAGAVEAVETFVRQLQERIIHQSSTTTNNNNNNALADIPRETTTTTTTTTTTTTIAASQSDLQQIWAWNATISPVAQRCVHHIIAEQAQLRPHAPAVAAWDGELNYQQLDQLSTRLALYLVQLGAGPQHMIPLCFEKSKWMIVAILAVMKSGAVIVALDPAQPEDRLQTIVNQLQQPRWIIASPAQTKVTTALGINNVIFLNHSLLQKLPDFPNRDLPSVDPSSNLYVVFTSGSTGTPKGVMINHTNFSSAIAYQHDALAMDHSSRVLDFASYAFDLAWGNIIHTLAAGGCLCIPCEDERRGNITEAICRLRVNHLQLTPSVARLIDPRDIPGLRTILLIGEPMSQADVAQWTPYAKMINSYGPAECTVAVTFQTIPHDKPWDSSMGKGVACNTWIVDETNGDTLVPLGHTGELWLEGPLVGQGYLGDPKKTAASFVDDPAWLTRGIPGVAGRPGRLYRTGDLVRYNQDGSLVYVARKDTQVKIRGQRVELGDVEYYLKLALPDKVLSVAAEAVIPWGSSTTLLVAYLALGDAATGAVESTRTSLATCLDGVEEYLAKQLPHYMVPSMYLAIPQIPMTTTGKTDRLRLREIGSSLTLDQLAAMQPSRATEKRAPQTEMEYRLQQLWAATLGIGPSSIGTEDSFLRIGGESMAAIRLVQLARKEGIVLTVADIFNQPRLCEMARAAQEKQTSVVPIVPPFSLLRGGAGEPDTRALAAAAACGVAAQSIADILPCTPLQEGLLALTAKQDGDYVHQLVSKLPATVDLVRLQAALTEVIQEAPILRTRIVDLPNAGLMQVVLTERFEWTTGSELDRFLESEKARPMGLGTPLSRFGLVSDHREGNLHFVWTIHHALYDGWSLPLLLERIEAVYAGDCSDSLPSFAGFVRYLADCPVADAHAYWQSQLNGAQAAVFPALPSPEYQPQCRDLLQCSIANVTWPGNDITASTAVRTAWAILTARYTLSADVLFGATVSGRQAPVPYIERMAGPTIATVPIRVNVQADSTVASLMQSIQSQAVAMIPYEQTGLKQIRQINSDTEQATQLQSLLVVQPPSSRSSRPPDECLLRVDLDAVDEFNTINTYALMLECRLGSNEMGLRIRYDRELIGTEQVERIAKQFEAVLRHVCSQETAQELVCTVTAASEDDLAQIWAWNATVPQNIPGCVHDLIAQRTQQQPDAPAICAWDGQLSYRELDVLSTRLAFSLVQRGAGRNTVIPLCFEKTVWTPVAMLAAIKAGSTVVAMDPGQPEDRLESIVKQTQPPLILASETYMPLASRLTEVAICVNTTALQVLAETCLEPPKLPIVHPTDGLYIAFTSGSTGNPKGATMTHQNTRSAIYHGLQALGFTSTTRVLGFSSYAFDAVWLEFLYAMASGGCLCIPSDLQRNSGDLAGCIAQLQVNHALLTPSTARLLDAAAVPTLRTLVLIGEAVTGEDLARWAGKVDLKNGYGPAECSALTTIYTFEGPNDQPSIIGPTVGLVPWVVEPSDGACLSPLGAVGELWVEGPLVGKGYLGDPDKTAASFVYDPSWLLHGAPGYPGRQARLYKTGDLVRYTSDGRLIYVGRKDTQVKIRGQRVELAEIEHYIKQATRASVVVDMASPQGSRGPVLVAYVALGQPAATLSPPETARAALQSCIQGVEDHLNKHLPRYMLPSFYIPVVEIPLTATGKTDRRRLRDTASAFALDQLAALQPSGESKRVLPQSPMEKSLQQLWAEVLNVDPSRIGMDESFFLLGGDSIAAMQVSAKSRVRGFPLTVQDIFKLKTIARLARREIQTDARLVDDQELLDTPFALSPIQQFFFDVERDRRGHFNQSFLVRITQSQQSELVLRAVQFIVGRHSMLRARFHQRPDDGVWMQQITPRADGSYVYRHHRLPSLEDAIPALNSSQQSLDVETGPIFAVDSVETAPGQQYLFLTAHHLVVDLVSWRIILEELEEYLKTDTVPSASSAPLSFQTWCRLQERYARDHLTPEVAFPFDLQPPPEAYWGLSPELNTHGDIHEAGFTLTKEATNLLLGPANRALQTQPVDLFLAALLYSFMNTFTDRDPPTVFTEGHGREPWSPEIDLSRTVGWFTTLVPIPVAAGSHTLGPSEFVRYIKDRRRQIPHNGWSYFTSRYLNAVGMASFGRHALPEIAFNYFGLYQQLERKEALFRASGCDLQDRVLDVAPHMTRFALIDVSAEVTQGCLQFRFLTSQHTQKQAALARWIAACERALEGTAVQLVNTPPSYTLSDFPLLPPTNTTSRLVETLSDHGLAYGELEDIYPCSPLQQGILLSQVKSQDMYWTQVRWRVRCNGGASPVDAARLERAWRQVVERHAVLRTRFIDSSYQMVLKEAAPSILTIQSADPVDAVVRHRATSGLSQPRPVHSLVLCPMANGDLVCSLEINHAIIDARSIQVLKHELCAAYGGALPAEPGPLYSDYIRHLQSLPTTDAMDFWRTQLANAQPCIFPTLNEPVVQARNAAAVASVPISPEIDQALRQFCRAHALTPANVFSLSWALILRCYTSSESICYGYVISGRDVPIPHVDRAVGPFINMVVSHVDVDNTRSLLGIMQEIQASYLSGVKYHHYPLAEILHDLNYNEGQPFFNTVLSVQSGSAAVDQPSPTATTIALENETWYDPNEYDIAASVLLRDNGKPEVSLNYAQNLLSERQAHAVATAFLDVVANIVRHPADRILGDLDTAILSPQDLATIWERNAEVPAALPSSVPALIACQVERQPDALAVCAWDGDFTYRQLDESSSRLAHHLLACGVRPHSILPLCFEKSRWVPVAMLGVLKAGCAAVTMDPEQPEERLRLVVQKTQAVILTSPACQDLARQLRPEVIILDGRSLQAMPPLLPDGLSLPTINPTDSLYLVFSSGTTGTPKGSVMSHQNACSAIYHQQACIGLPPSEARILDALSYAFDAPWFTFLHGLTSGGCLCIPSDTQRKEDLAGCIRGLGANYAILTPSVARLVDPPTVPSLEALGLGGEAIQTEDVTRWTSHVTLFGYYGPSECTICATIHRFKDRTDEPRMLGHSVGMRAWVVDPVHGRSLTPLGGTGELCLEGPLVGQGYLDEPEKTAASFVEDPGWLLRGAGPGYPGRRGRVYHTGDLVRCRTDGSMLYVGRKDTQVKIRGQRVELGEVEYHFRQTLPAGVDGPGTVVVEFVLFQGSTSPVLVAFIPLGHEATASAQSTRAALARCTDGAEERLIKRLPTYMIPRMYVPVAEIPLTTSGKTDRRSLQHVASSHTLEQIAALQPSRHMRRAPTTEMERHLQGLWATILDIDPATIAATDNFLRMGGDSIAAIRLVQLAGEQDILLTVAAVFKSPTLCEMSQVAKLGSVSSQNDPIPPFSLLNAEMDASQARVQVAALCELSPSSVEDVFPCTPLQEGLLSLTVKHQGDYVNRQVFALHSEVDPARFRNAWNKVSLSTSILRTRIVDLPGQGLVQVITSELPEWHHGRSLDDLVDEDRQRHIALGTPLARFGLVANADVNGDQQQYFLLTLHHALYDGWSLPLLLEEVAKAYYETPAANLVSFKSFVNHVTELGAEADSYWQSTLDGLTAVPFPSLPSPLYQPRAQDILEHDISGLQWLQNHITPATAIRAAWALLTAHYTQSTDVVLGSTVTGRQAPIHRIELVEGPTITTVPVRIPIDGKMSLAGLLDQVQEQSIDMIPYEQVGLQRIRRLSADSEQACQFQTLLVVQPAPEPTSSLGYARLFHEEEDPTASQTALNNFNSYALLLQCQLMPTGVAIQMSYDSHVMPQPQMHHLARQFENILRLLCDASHHQSPVSQLDVICEDDLRTIWASNSPVPARIEACMHDVITKQTQRRSAAQAVAAWDGSLTYSELDELSTQLAYDLVNLGIAPQTVIALCFEKSMWMPVAMLGVMKAGCASVTLDITQPEDRLRTIIQQVQPPVVLSSREAKILAQRLTDGPVHVVSQDSLQASSTPGKVERDQLPVVQPTDQLYICFTSGSTGVPKGAVMSHQNMTSAVHHQQAGLGFTESCRVFDFSSYAFDACWLNFLHTMAAGACLCIPSEEERKSDIVGCMRRMAVTYANLTPSTARLIDPTSIPDLQTLVLIGEPVAQQDIDQWKAHVQLKNGYGPAECSAISTTFDYGQSDCDPRTIGAGCGMITWVVEPTESRHLSPYGAVGELWVEGPLVGIGYLGRSDLSAASFMDSPPWLLRGGSHEFPGRSGRVYRTGDLVHYNLDGSGTLVCVGRKDAQVKIRGQRVELGEVEHFLNQALPLAAAEGVSIAVDVINLQGSANPLLVAYLAIGELALGPAETVRAKLAYYSQGARERLADQLPGYMVPSLFLPVVEIPMTTTGKRDRRRLRETWASSSLEELVELQPTRTNHQPPTTDLERQIQQLWAECLNVTPSKIGIHDSFFALGGDSISAMQLSAKGRSVNLPMTVSDIFKHKSIARLALSVSAAVDVTVAHAPEDHGVSFALSPIQQMFADTQQGVSNHFNQSFFVQVCQPVIFPQVQAAVDVLVAHHGMLRASLRCSGDNIWSQQILPPGTTGTYRVSQHDVPDFQAASAVINQSQLSLDIQSGPVMAVDLINTNKGQYLFLVAHHMVVDLVSWRIILADLEEHLTTASLSGFTSMSFQTWCQLQVDHAQSHVELEAVLPAGASPPPPPQLDYWGPVRNSNTFDNIVKGGIVLSKPVTEALLGPANIAFDTQLVELLHASLLHSFAKVFHDRTPPTIYSEGHGREPWSSTIDISRTVGWFTTMFPVVATAEKGDSIASIVRHVKDCRRQIPGNGRPYFATRFLTPAGKRAFQHHGPVEVIFNYLGLYQQLEREDSLFRQRGVPNGVDEMADISGRLFRFALVDISASVTDGALHVDFLYNRHMQHQDSIRAWIEECQRSLQAAAQALPLLQPSYTLCSFPLLRLADSALPILQHRLAELGLAYGQVEDIYPCSPLQNGILLSQMRDPDLYRTRVRWMAQPAHGSQSLDILKLKQAWQQLVDRHPILRTLFVEGISGRGLKDQLVVKNLQANVHIVQSSADNARSQSPSAPTARKSDSLLTLSMTETGVLCELSINHALIDAFSLGILKEELCAAYEGCLSSLAPLYSDYIQYTQSVSMESAEAYWQDHLRGVQPCLFPPLSNPNAESRRSHTSISVPFEQDLHLALRTFCIEHEVTTSNVFHVAWGLVLRAYTGLETVCFGYLKSGRDIPLQGADRTVGPFINMLTSRVDLANRGDSLLTLIQRNQEQYLASLEFQHIPLAKIFHLTDTPEKELFNTAISVQAVRTGPENTQSAMSLLDVGGDDPTEYDILINFGVGDDQTGFIFNFNDSVISPSHAKSALDLFLHAVSHTVQHKDQSAQDANIISHQDLETIWRWNAAVPKPHHQCVHELIMQQAESQPGAAAIHAWDGDLTYQELNDLSTQLACHIRYLGVEAGVHVPLLFEKSQWMSVASLAVMKAGGTMVGLDPSQPEERLQNIIQQVQPRLILASANAHATIAAVLAGACPVVRVDAASLAELNNTVSHFPLPRVDPATSLYLVFTSGSTGLPKGVAISHSNLSTAIAHQRSILRLSSSSRVLEFASYAFDVAWGTILHTLAAGGCVCVPEESERRGDLSAAIRRLEVNYMHLTPTVARLLSPTHLPRLQTLVLSGETVSQADVEQWISHVHLINAYGPAEATVWDTFADLTPGISIPSIGRGVGCSTWVVNPRRPDQLAPVGCTGELWLEGPLVGTGYHHDPERTAAAFVENPRWLVEGAGGSRYPGRQGRLYRTGDLVRYTSDGSIVYVGRKDNQVKIHGQRVELEEIEKHIQQALLDSSVSAAPAVPVVAAVIIPKKSTRPILVAYLALGEEATSSLGVLRRRLGTYAAVINQGLEKHLPTYMRPSIYIPVADIPMTTNGKADRRKLDAIGCGRTLAEWAGLQTDEDSQCTTASSPEELELQRLFSEVLNLDCGLVGMNDSFFSLGGDSITAMQLSAKSQSGRVYITVGDIFRHKTVAQLVSHAQGNTATKTSFEELVEVPDSLFELSPIQQLFFASQDTGKSLFNQSFLVSVSRPLNSNELDHAIGVLTARHSMLRARFVHGADGRWQQKIAADTAGCYVFRSHQITDFQDMEPVLHNSQLSLDIVRGPILAVDLVDSTQDGQQYLFMAAHHLIVDLVSWRIILGDLEEYLLSGTIAGFPPFSFQSWSQLQAQYARDHLPPQIALPFEVSPPRHDYWGLAPGDVANTLGDASRSSFTIDEHLTNVLLGPTANSAFDTQPVEILHAALLYAFAQTFKDRDAPSFFSEGHGREAWDSAIDLSRTVGWFTTIFPVAASVTQKNSLAEVVRCIKDTRRQTPANGWSYFTSRYLNPAGQRVFQLKGPVEIIFNYMGLYQQLERPDALFQQSDIAVTEPPAAAETLSRFALIDVAGSIVHGQLKLEFVYNKKMSGQDKIVEWIGRCKSSLEAAAAELPRLSPSYTICDFPLLSLSSTSLDRLTAEVLPALDIAYGQVEDIYPCAPIQQGILLSQAKNPELYWTRVRWTVQSTSTLPVDLSRLKHAWQLVVSRHAILRTIFIDGIGSGTVKNQVVLKDLRVDVGVLHPEQDSGHERRTILLSQTQLPQHALALAQTPSGGVLCDLEINHGMMDAYSLGLLRQEICAAYSGTLPTSPAPSYRSYIQHLQGVSVDEGHRFWKTYLDNIQPCHFPALGVVHGDDGPKTRSARSILLDTATHRTLRAFCRQHGVTSSNLFYLAWGLLLRTYTRSDRVCFGYLTSGRDVPVPGVDKIIGPLINMLVCALDFGEKASVRSVMRKVQEDYLSALSHQSTPLSKMLQLAGTSGQGLFNTGISVQGGAASSDLDQQDITITDQTGEDSPEYDIAVAISHDEDETEISFDYTDAALSSEAAESLGEFLVDIVADLVRDPDQSVQAITMISQQDLRSLWTWNRSVAETEHACVHDLIGTNVQKRPDAPAIDAWDGSLTYRALDSLSSRLACYLAHRGIQPNAAIPLCFEKSMWMPVAALAVIKAGGACVAMDMTQPEQRLRTILHQVQPDLLLASSENAQVARQLGDSQPVLEISQSFFTGLSRPISLCLPPVMPSGHLYTVFTSGSTGIPKGVIISHANFASAIVHQTGLLSLGPDSRVFDFVSYAFDVSWSNLLHTLAAGACLCIPSEAMRRDNPVEAMAAMQVTHAQLTPSMARTVDPDRCETLRTLILGGEAMSPHDIATWASRVDLRVAYGPAECTVAGVTATVPPQSAAHWELGKIGHGLGMNTWIVSMLDPTSLAPVGTVGELYLEGPLVGQGYLDQPDKTATGFVDDPAWLVRGGPSGSFPGRRGRLYRTGDLVRYCPDGSLLFVGRRDNQVKVRGQRVELQEVESHLQAHLVEAIGVVADVFKPQGSSNAMLVAYLAVGETIHSPTDRIHTALRPLIQGLNESLSAQIPQYMIPSMYIPVASIPIAATGKADRKCLRQLGSSLTLEQLARIQPPQDGEQQQGPQTEVERLLQGIWADVLNIRGQECIGVRESFFALGGDSISAMQLSTKMRSAGFSITVPDIFKLKTIANLARSARTVQGHVKTTTTWETRDDEPFDLAPVQQMFADVVRRKCNHFNQSYFLRIARPSIRAADVQRALEWVVRQHPMLRARFTLDPSGRWTQHIKPYTPGCYRYLEHVVESSFAEASPVLNASQTSLDLETGPLFSADLIQIRSTGDHYLYLVAHHMVVDLVSWRVIIAEIEDHLTAPNASSSSSLAPPMPFQAWCRLQAEHARDHLAPETALPVEIPPPPPGYWGAGDPESNTFGNAIHRSFKLTREVTDLLLGPANKAFDTQPVEILQGALLYSFVQVFQDRAPPTIFSEGHGREPWNTAIDLSRTVGWFTTLLPTVTSMGSDNTLAELVRHTKDCRRQVPGNGWPYFASRYLNPAGKQAFGTYGLPEITFNYLGANLGLDQGPGKDDSLLQPAALPPGCLSDVDESMPRFAWIEVSASVSSGCLEFGFLFGRCMKHRKSIEDWVAQCQRSLVTASELLMQRPPSYTRSDFPLLRLTEPALQTLVGSSLPQLGVSYGQVEDIYPCSPIQQGILLSQAKDPRVYWTRIRWRARSSDATMPLDPDRLARAWTRVVERHPVLRTRFINGLSPDSLKDQLVLKVSKPEIHVISGQEATDDPIAALDCYWERAQRKDHQLHALVMCPADASSGDVFCDLEMNHAITDATSTALLKRDIQAAYNGTLPETQPGPSYSDFIRHIHAIPAEVGMEYWRRYLEGAYACIFPTLAPAAATNSQDATVQNHPRGSLSHTLEQETHASLQAFLKTHELTAFNVFHLAWALILRCFVGSETLCFGYLLSGRDVPVDHADQIIGPFINMLVSRVGLGEGVTLMDAMKQSQADYLDSLTHQHCSLAQIINSLGNGGAEPLYNSVISVQGMDLKKENAGIDRGLCLEEQGGHDPTEYGIMINVGLGEQETAITFSYHVSLLSEEQASGVVDSLLRAVREIIRTPFRKAHEVDLSTDHDQQAIWAWNACVPPTVDLPVHGLVANTVQKQPHSTAICAWDGELSYGQLDELSTTLAHHLLARGLSSDTVVPLCFEKSLWMPVAILAVMKAGGVSVSMDANQPEERLRTIIEQTQPVIILCSETTHEKACRLGTCQVIPVGQRLLAGLAVPGQDATTRTTTTTTTTTTTLPIVDPSHRLYITFTSGSTGTPKGAIVTHSNFSSALLQQQEALSFGPHVRVFDFVSYAWDVAWSNLLRTLVAGGCLCIPSEFQRREEIEKTMSQLRVNYTTLTPSVARLLNPAAVPHLDTLALIGEPLSQADIARWAPHTKEIINTYGPSECPGCVTVSQIPLDTLYEPTLGVGSACNTWIVDPNNADHLVPVGGIGELWLEGPLIGLGYLGLPQRTAESFVTDPRWLLSGCPGRPGRGGRLYRTGDLVRYAPDGALIYIGRKDSQVKIRGQRVELGEIEYHVREGIAHISPVTDDLTVVAGVITPRGGSSKTLVVYLELGPIATGPVDRIRDALAGYTRGLDDYLSDRLPQYMLPNAYIPVAEIPMTVSGKTDRGRLSRIGASYTLSELAAMQPSSHEQRQSPTAPMERRLQQLWATVLGLDDPNAIAADASFFRIGGDSIAAIRLSQRASEDGLALTAADIFRKPRLCDLALLVREGDATSYHEPRPFSLLSAGGSGGAESNRLPDDLAARIGPLLEWPQHHIADVYPTTDLQNHYVSAAVDAHRGEVEYIYMDLPRGVDLARVQRSCLELWRHLDILRTVFIVDPQTRQTLQVVLNNVEPEIEVRHTEGDLRAACEQAYGEDLHRPLYLGRSFTRFLITANRASGDARLTLRLSHAQYDGFSLPIIFSLFAAFHRDDTPPPAAPKFAGYLRHVQKQRPAAEPYWRRLLEGSCITQTRHLSGLDGACRPNQHHGQLVQSKSTVPAPPARPGSTPATVFTTLCARTLAQLTGVRDVVFGNIVSGRATLPTALQTVAGPCVNTIPVRLRVEPEQSLTQQLATVHAQHIHSLPFETSQFSEIAAHCTDWPGDARAPGLVVQFQNLDNLEHDPGTAMHDTTEGGGTLAAYERPAAERLVDSDFLFILAKPVRDAWELSVAASDKLHTQATLDAVLEALCWQVEMVARGD</sequence>
<dbReference type="EC" id="6.3.2.-" evidence="3"/>
<dbReference type="EMBL" id="KZ825194">
    <property type="protein sequence ID" value="PYI15152.1"/>
    <property type="status" value="ALT_SEQ"/>
    <property type="molecule type" value="Genomic_DNA"/>
</dbReference>
<dbReference type="STRING" id="1450538.A0A2V5H0B0"/>
<dbReference type="Proteomes" id="UP000249829">
    <property type="component" value="Unassembled WGS sequence"/>
</dbReference>
<dbReference type="GO" id="GO:0005737">
    <property type="term" value="C:cytoplasm"/>
    <property type="evidence" value="ECO:0007669"/>
    <property type="project" value="TreeGrafter"/>
</dbReference>
<dbReference type="GO" id="GO:0016853">
    <property type="term" value="F:isomerase activity"/>
    <property type="evidence" value="ECO:0007669"/>
    <property type="project" value="UniProtKB-KW"/>
</dbReference>
<dbReference type="GO" id="GO:0016874">
    <property type="term" value="F:ligase activity"/>
    <property type="evidence" value="ECO:0007669"/>
    <property type="project" value="UniProtKB-KW"/>
</dbReference>
<dbReference type="GO" id="GO:0031177">
    <property type="term" value="F:phosphopantetheine binding"/>
    <property type="evidence" value="ECO:0007669"/>
    <property type="project" value="InterPro"/>
</dbReference>
<dbReference type="GO" id="GO:0043041">
    <property type="term" value="P:amino acid activation for nonribosomal peptide biosynthetic process"/>
    <property type="evidence" value="ECO:0007669"/>
    <property type="project" value="TreeGrafter"/>
</dbReference>
<dbReference type="GO" id="GO:0044550">
    <property type="term" value="P:secondary metabolite biosynthetic process"/>
    <property type="evidence" value="ECO:0007669"/>
    <property type="project" value="TreeGrafter"/>
</dbReference>
<dbReference type="CDD" id="cd05918">
    <property type="entry name" value="A_NRPS_SidN3_like"/>
    <property type="match status" value="7"/>
</dbReference>
<dbReference type="CDD" id="cd19542">
    <property type="entry name" value="CT_NRPS-like"/>
    <property type="match status" value="4"/>
</dbReference>
<dbReference type="CDD" id="cd19534">
    <property type="entry name" value="E_NRPS"/>
    <property type="match status" value="4"/>
</dbReference>
<dbReference type="CDD" id="cd19545">
    <property type="entry name" value="FUM14_C_NRPS-like"/>
    <property type="match status" value="2"/>
</dbReference>
<dbReference type="FunFam" id="3.30.559.10:FF:000016">
    <property type="entry name" value="Nonribosomal peptide synthase Pes1"/>
    <property type="match status" value="2"/>
</dbReference>
<dbReference type="FunFam" id="3.30.559.30:FF:000002">
    <property type="entry name" value="Nonribosomal peptide synthase Pes1"/>
    <property type="match status" value="4"/>
</dbReference>
<dbReference type="FunFam" id="3.30.300.30:FF:000015">
    <property type="entry name" value="Nonribosomal peptide synthase SidD"/>
    <property type="match status" value="7"/>
</dbReference>
<dbReference type="FunFam" id="3.30.559.30:FF:000003">
    <property type="entry name" value="Nonribosomal peptide synthase SidD"/>
    <property type="match status" value="2"/>
</dbReference>
<dbReference type="FunFam" id="1.10.1200.10:FF:000005">
    <property type="entry name" value="Nonribosomal peptide synthetase 1"/>
    <property type="match status" value="4"/>
</dbReference>
<dbReference type="FunFam" id="3.40.50.12780:FF:000014">
    <property type="entry name" value="Nonribosomal peptide synthetase 1"/>
    <property type="match status" value="3"/>
</dbReference>
<dbReference type="Gene3D" id="3.30.300.30">
    <property type="match status" value="7"/>
</dbReference>
<dbReference type="Gene3D" id="1.10.1200.10">
    <property type="entry name" value="ACP-like"/>
    <property type="match status" value="7"/>
</dbReference>
<dbReference type="Gene3D" id="3.30.559.10">
    <property type="entry name" value="Chloramphenicol acetyltransferase-like domain"/>
    <property type="match status" value="11"/>
</dbReference>
<dbReference type="Gene3D" id="3.40.50.12780">
    <property type="entry name" value="N-terminal domain of ligase-like"/>
    <property type="match status" value="7"/>
</dbReference>
<dbReference type="Gene3D" id="3.30.559.30">
    <property type="entry name" value="Nonribosomal peptide synthetase, condensation domain"/>
    <property type="match status" value="11"/>
</dbReference>
<dbReference type="InterPro" id="IPR010071">
    <property type="entry name" value="AA_adenyl_dom"/>
</dbReference>
<dbReference type="InterPro" id="IPR036736">
    <property type="entry name" value="ACP-like_sf"/>
</dbReference>
<dbReference type="InterPro" id="IPR045851">
    <property type="entry name" value="AMP-bd_C_sf"/>
</dbReference>
<dbReference type="InterPro" id="IPR020845">
    <property type="entry name" value="AMP-binding_CS"/>
</dbReference>
<dbReference type="InterPro" id="IPR000873">
    <property type="entry name" value="AMP-dep_synth/lig_dom"/>
</dbReference>
<dbReference type="InterPro" id="IPR042099">
    <property type="entry name" value="ANL_N_sf"/>
</dbReference>
<dbReference type="InterPro" id="IPR023213">
    <property type="entry name" value="CAT-like_dom_sf"/>
</dbReference>
<dbReference type="InterPro" id="IPR001242">
    <property type="entry name" value="Condensatn"/>
</dbReference>
<dbReference type="InterPro" id="IPR020806">
    <property type="entry name" value="PKS_PP-bd"/>
</dbReference>
<dbReference type="InterPro" id="IPR009081">
    <property type="entry name" value="PP-bd_ACP"/>
</dbReference>
<dbReference type="InterPro" id="IPR006162">
    <property type="entry name" value="Ppantetheine_attach_site"/>
</dbReference>
<dbReference type="NCBIfam" id="TIGR01733">
    <property type="entry name" value="AA-adenyl-dom"/>
    <property type="match status" value="7"/>
</dbReference>
<dbReference type="NCBIfam" id="NF003417">
    <property type="entry name" value="PRK04813.1"/>
    <property type="match status" value="7"/>
</dbReference>
<dbReference type="PANTHER" id="PTHR45527">
    <property type="entry name" value="NONRIBOSOMAL PEPTIDE SYNTHETASE"/>
    <property type="match status" value="1"/>
</dbReference>
<dbReference type="PANTHER" id="PTHR45527:SF15">
    <property type="entry name" value="NONRIBOSOMAL PEPTIDE SYNTHETASE EASA-RELATED"/>
    <property type="match status" value="1"/>
</dbReference>
<dbReference type="Pfam" id="PF00501">
    <property type="entry name" value="AMP-binding"/>
    <property type="match status" value="7"/>
</dbReference>
<dbReference type="Pfam" id="PF00668">
    <property type="entry name" value="Condensation"/>
    <property type="match status" value="11"/>
</dbReference>
<dbReference type="Pfam" id="PF00550">
    <property type="entry name" value="PP-binding"/>
    <property type="match status" value="7"/>
</dbReference>
<dbReference type="SMART" id="SM00823">
    <property type="entry name" value="PKS_PP"/>
    <property type="match status" value="7"/>
</dbReference>
<dbReference type="SUPFAM" id="SSF56801">
    <property type="entry name" value="Acetyl-CoA synthetase-like"/>
    <property type="match status" value="7"/>
</dbReference>
<dbReference type="SUPFAM" id="SSF47336">
    <property type="entry name" value="ACP-like"/>
    <property type="match status" value="7"/>
</dbReference>
<dbReference type="SUPFAM" id="SSF52777">
    <property type="entry name" value="CoA-dependent acyltransferases"/>
    <property type="match status" value="22"/>
</dbReference>
<dbReference type="PROSITE" id="PS00455">
    <property type="entry name" value="AMP_BINDING"/>
    <property type="match status" value="4"/>
</dbReference>
<dbReference type="PROSITE" id="PS50075">
    <property type="entry name" value="CARRIER"/>
    <property type="match status" value="5"/>
</dbReference>
<dbReference type="PROSITE" id="PS00012">
    <property type="entry name" value="PHOSPHOPANTETHEINE"/>
    <property type="match status" value="3"/>
</dbReference>
<proteinExistence type="inferred from homology"/>
<gene>
    <name evidence="4" type="primary">ungA</name>
    <name type="ORF">BO99DRAFT_368823</name>
</gene>
<feature type="chain" id="PRO_0000458908" description="Nonribosomal peptide synthetase ungA">
    <location>
        <begin position="1"/>
        <end position="9702"/>
    </location>
</feature>
<feature type="domain" description="Carrier 1" evidence="2">
    <location>
        <begin position="775"/>
        <end position="852"/>
    </location>
</feature>
<feature type="domain" description="Carrier 2" evidence="2">
    <location>
        <begin position="1857"/>
        <end position="1933"/>
    </location>
</feature>
<feature type="domain" description="Carrier 3" evidence="2">
    <location>
        <begin position="3397"/>
        <end position="3473"/>
    </location>
</feature>
<feature type="domain" description="Carrier 4" evidence="2">
    <location>
        <begin position="4491"/>
        <end position="4568"/>
    </location>
</feature>
<feature type="domain" description="Carrier 5" evidence="2">
    <location>
        <begin position="6033"/>
        <end position="6110"/>
    </location>
</feature>
<feature type="domain" description="Carrier 6" evidence="2">
    <location>
        <begin position="7575"/>
        <end position="7655"/>
    </location>
</feature>
<feature type="domain" description="Carrier 7" evidence="2">
    <location>
        <begin position="9158"/>
        <end position="9236"/>
    </location>
</feature>
<feature type="region of interest" description="Adenylation 1" evidence="1 6">
    <location>
        <begin position="248"/>
        <end position="647"/>
    </location>
</feature>
<feature type="region of interest" description="Condensation 1" evidence="1 6">
    <location>
        <begin position="891"/>
        <end position="1288"/>
    </location>
</feature>
<feature type="region of interest" description="Adenylation 2" evidence="1 6">
    <location>
        <begin position="1330"/>
        <end position="1730"/>
    </location>
</feature>
<feature type="region of interest" description="Epimerization 1" evidence="1 6">
    <location>
        <begin position="1946"/>
        <end position="2374"/>
    </location>
</feature>
<feature type="region of interest" description="Condensation 2" evidence="1 6">
    <location>
        <begin position="2414"/>
        <end position="2842"/>
    </location>
</feature>
<feature type="region of interest" description="Adenylation 3" evidence="1 6">
    <location>
        <begin position="2868"/>
        <end position="3267"/>
    </location>
</feature>
<feature type="region of interest" description="Condensation 3" evidence="1 6">
    <location>
        <begin position="3512"/>
        <end position="3920"/>
    </location>
</feature>
<feature type="region of interest" description="Adenylation 4" evidence="1 6">
    <location>
        <begin position="3957"/>
        <end position="4361"/>
    </location>
</feature>
<feature type="region of interest" description="Epimerization 2" evidence="1 6">
    <location>
        <begin position="4583"/>
        <end position="5013"/>
    </location>
</feature>
<feature type="region of interest" description="Condensation 4" evidence="1 6">
    <location>
        <begin position="5049"/>
        <end position="5474"/>
    </location>
</feature>
<feature type="region of interest" description="Adenylation 5" evidence="1 6">
    <location>
        <begin position="5496"/>
        <end position="5899"/>
    </location>
</feature>
<feature type="region of interest" description="Epimerization 3" evidence="1 6">
    <location>
        <begin position="6127"/>
        <end position="6551"/>
    </location>
</feature>
<feature type="region of interest" description="Condensation 5" evidence="1 6">
    <location>
        <begin position="6593"/>
        <end position="6935"/>
    </location>
</feature>
<feature type="region of interest" description="Adenylation 6" evidence="1 6">
    <location>
        <begin position="7047"/>
        <end position="7447"/>
    </location>
</feature>
<feature type="region of interest" description="Epimerization 4" evidence="1 6">
    <location>
        <begin position="7670"/>
        <end position="8106"/>
    </location>
</feature>
<feature type="region of interest" description="Condensation 6" evidence="1 6">
    <location>
        <begin position="8144"/>
        <end position="8588"/>
    </location>
</feature>
<feature type="region of interest" description="Adenylation 7" evidence="1 6">
    <location>
        <begin position="8612"/>
        <end position="9025"/>
    </location>
</feature>
<feature type="region of interest" description="Condensation 7" evidence="1 6">
    <location>
        <begin position="9282"/>
        <end position="9629"/>
    </location>
</feature>
<feature type="modified residue" description="O-(pantetheine 4'-phosphoryl)serine" evidence="2">
    <location>
        <position position="812"/>
    </location>
</feature>
<feature type="modified residue" description="O-(pantetheine 4'-phosphoryl)serine" evidence="2">
    <location>
        <position position="1894"/>
    </location>
</feature>
<feature type="modified residue" description="O-(pantetheine 4'-phosphoryl)serine" evidence="2">
    <location>
        <position position="3434"/>
    </location>
</feature>
<feature type="modified residue" description="O-(pantetheine 4'-phosphoryl)serine" evidence="2">
    <location>
        <position position="4528"/>
    </location>
</feature>
<feature type="modified residue" description="O-(pantetheine 4'-phosphoryl)serine" evidence="2">
    <location>
        <position position="6070"/>
    </location>
</feature>
<feature type="modified residue" description="O-(pantetheine 4'-phosphoryl)serine" evidence="2">
    <location>
        <position position="7613"/>
    </location>
</feature>
<feature type="modified residue" description="O-(pantetheine 4'-phosphoryl)serine" evidence="2">
    <location>
        <position position="9196"/>
    </location>
</feature>
<evidence type="ECO:0000255" key="1"/>
<evidence type="ECO:0000255" key="2">
    <source>
        <dbReference type="PROSITE-ProRule" id="PRU00258"/>
    </source>
</evidence>
<evidence type="ECO:0000269" key="3">
    <source>
    </source>
</evidence>
<evidence type="ECO:0000303" key="4">
    <source>
    </source>
</evidence>
<evidence type="ECO:0000305" key="5"/>
<evidence type="ECO:0000305" key="6">
    <source>
    </source>
</evidence>